<organism>
    <name type="scientific">Mycobacterium bovis (strain ATCC BAA-935 / AF2122/97)</name>
    <dbReference type="NCBI Taxonomy" id="233413"/>
    <lineage>
        <taxon>Bacteria</taxon>
        <taxon>Bacillati</taxon>
        <taxon>Actinomycetota</taxon>
        <taxon>Actinomycetes</taxon>
        <taxon>Mycobacteriales</taxon>
        <taxon>Mycobacteriaceae</taxon>
        <taxon>Mycobacterium</taxon>
        <taxon>Mycobacterium tuberculosis complex</taxon>
    </lineage>
</organism>
<keyword id="KW-1015">Disulfide bond</keyword>
<keyword id="KW-0676">Redox-active center</keyword>
<keyword id="KW-1185">Reference proteome</keyword>
<keyword id="KW-0964">Secreted</keyword>
<keyword id="KW-0732">Signal</keyword>
<comment type="function">
    <text evidence="1">Disulfide oxidoreductase that catalyzes the oxidation of reduced, unfolded secreted proteins to form disulfide bonds. Despite a weak homology to thioredoxin this cannot serve as a substrate for thioredoxin reductase (By similarity).</text>
</comment>
<comment type="subcellular location">
    <subcellularLocation>
        <location>Secreted</location>
    </subcellularLocation>
</comment>
<comment type="similarity">
    <text evidence="3">Belongs to the thioredoxin family.</text>
</comment>
<sequence>MSLRLVSPIKAFADGIVAVAIAVVLMFGLANTPRAVAADERLQFTATTLSGAPFDGASLQGKPAVLWFWTPWCPFCNAEAPSLSQVAAANPAVTFVGIATRADVGAMQSFVSKYNLNFTNLNDADGVIWARYNVPWQPAFVFYRADGTSTFVNNPTAAMSQDELSGRVAALTS</sequence>
<gene>
    <name type="primary">mpt53</name>
    <name type="synonym">mpb53</name>
    <name type="ordered locus">BQ2027_MB2903C</name>
</gene>
<proteinExistence type="inferred from homology"/>
<accession>P0A619</accession>
<accession>A0A1R3Y2I0</accession>
<accession>Q10804</accession>
<accession>X2BMA0</accession>
<feature type="signal peptide" evidence="1">
    <location>
        <begin position="1"/>
        <end position="38"/>
    </location>
</feature>
<feature type="chain" id="PRO_0000034291" description="Soluble secreted antigen MPT53">
    <location>
        <begin position="39"/>
        <end position="173"/>
    </location>
</feature>
<feature type="disulfide bond" description="Redox-active" evidence="2">
    <location>
        <begin position="73"/>
        <end position="76"/>
    </location>
</feature>
<name>MPT53_MYCBO</name>
<protein>
    <recommendedName>
        <fullName>Soluble secreted antigen MPT53</fullName>
    </recommendedName>
</protein>
<dbReference type="EMBL" id="LT708304">
    <property type="protein sequence ID" value="SIU01524.1"/>
    <property type="molecule type" value="Genomic_DNA"/>
</dbReference>
<dbReference type="RefSeq" id="NP_856548.1">
    <property type="nucleotide sequence ID" value="NC_002945.3"/>
</dbReference>
<dbReference type="RefSeq" id="WP_003414654.1">
    <property type="nucleotide sequence ID" value="NC_002945.4"/>
</dbReference>
<dbReference type="SMR" id="P0A619"/>
<dbReference type="KEGG" id="mbo:BQ2027_MB2903C"/>
<dbReference type="PATRIC" id="fig|233413.5.peg.3186"/>
<dbReference type="Proteomes" id="UP000001419">
    <property type="component" value="Chromosome"/>
</dbReference>
<dbReference type="GO" id="GO:0005576">
    <property type="term" value="C:extracellular region"/>
    <property type="evidence" value="ECO:0007669"/>
    <property type="project" value="UniProtKB-SubCell"/>
</dbReference>
<dbReference type="GO" id="GO:0016209">
    <property type="term" value="F:antioxidant activity"/>
    <property type="evidence" value="ECO:0007669"/>
    <property type="project" value="InterPro"/>
</dbReference>
<dbReference type="GO" id="GO:0016491">
    <property type="term" value="F:oxidoreductase activity"/>
    <property type="evidence" value="ECO:0007669"/>
    <property type="project" value="InterPro"/>
</dbReference>
<dbReference type="CDD" id="cd03011">
    <property type="entry name" value="TlpA_like_ScsD_MtbDsbE"/>
    <property type="match status" value="1"/>
</dbReference>
<dbReference type="FunFam" id="3.40.30.10:FF:000238">
    <property type="entry name" value="Soluble secreted antigen Mpt53"/>
    <property type="match status" value="1"/>
</dbReference>
<dbReference type="Gene3D" id="3.40.30.10">
    <property type="entry name" value="Glutaredoxin"/>
    <property type="match status" value="1"/>
</dbReference>
<dbReference type="InterPro" id="IPR000866">
    <property type="entry name" value="AhpC/TSA"/>
</dbReference>
<dbReference type="InterPro" id="IPR036249">
    <property type="entry name" value="Thioredoxin-like_sf"/>
</dbReference>
<dbReference type="InterPro" id="IPR013766">
    <property type="entry name" value="Thioredoxin_domain"/>
</dbReference>
<dbReference type="InterPro" id="IPR050553">
    <property type="entry name" value="Thioredoxin_ResA/DsbE_sf"/>
</dbReference>
<dbReference type="PANTHER" id="PTHR42852">
    <property type="entry name" value="THIOL:DISULFIDE INTERCHANGE PROTEIN DSBE"/>
    <property type="match status" value="1"/>
</dbReference>
<dbReference type="PANTHER" id="PTHR42852:SF17">
    <property type="entry name" value="THIOREDOXIN-LIKE PROTEIN HI_1115"/>
    <property type="match status" value="1"/>
</dbReference>
<dbReference type="Pfam" id="PF00578">
    <property type="entry name" value="AhpC-TSA"/>
    <property type="match status" value="1"/>
</dbReference>
<dbReference type="SUPFAM" id="SSF52833">
    <property type="entry name" value="Thioredoxin-like"/>
    <property type="match status" value="1"/>
</dbReference>
<dbReference type="PROSITE" id="PS51352">
    <property type="entry name" value="THIOREDOXIN_2"/>
    <property type="match status" value="1"/>
</dbReference>
<evidence type="ECO:0000250" key="1"/>
<evidence type="ECO:0000255" key="2">
    <source>
        <dbReference type="PROSITE-ProRule" id="PRU00691"/>
    </source>
</evidence>
<evidence type="ECO:0000305" key="3"/>
<reference key="1">
    <citation type="journal article" date="2003" name="Proc. Natl. Acad. Sci. U.S.A.">
        <title>The complete genome sequence of Mycobacterium bovis.</title>
        <authorList>
            <person name="Garnier T."/>
            <person name="Eiglmeier K."/>
            <person name="Camus J.-C."/>
            <person name="Medina N."/>
            <person name="Mansoor H."/>
            <person name="Pryor M."/>
            <person name="Duthoy S."/>
            <person name="Grondin S."/>
            <person name="Lacroix C."/>
            <person name="Monsempe C."/>
            <person name="Simon S."/>
            <person name="Harris B."/>
            <person name="Atkin R."/>
            <person name="Doggett J."/>
            <person name="Mayes R."/>
            <person name="Keating L."/>
            <person name="Wheeler P.R."/>
            <person name="Parkhill J."/>
            <person name="Barrell B.G."/>
            <person name="Cole S.T."/>
            <person name="Gordon S.V."/>
            <person name="Hewinson R.G."/>
        </authorList>
    </citation>
    <scope>NUCLEOTIDE SEQUENCE [LARGE SCALE GENOMIC DNA]</scope>
    <source>
        <strain>ATCC BAA-935 / AF2122/97</strain>
    </source>
</reference>
<reference key="2">
    <citation type="journal article" date="2017" name="Genome Announc.">
        <title>Updated reference genome sequence and annotation of Mycobacterium bovis AF2122/97.</title>
        <authorList>
            <person name="Malone K.M."/>
            <person name="Farrell D."/>
            <person name="Stuber T.P."/>
            <person name="Schubert O.T."/>
            <person name="Aebersold R."/>
            <person name="Robbe-Austerman S."/>
            <person name="Gordon S.V."/>
        </authorList>
    </citation>
    <scope>NUCLEOTIDE SEQUENCE [LARGE SCALE GENOMIC DNA]</scope>
    <scope>GENOME REANNOTATION</scope>
    <source>
        <strain>ATCC BAA-935 / AF2122/97</strain>
    </source>
</reference>